<proteinExistence type="inferred from homology"/>
<name>EFG_PARDP</name>
<protein>
    <recommendedName>
        <fullName evidence="1">Elongation factor G</fullName>
        <shortName evidence="1">EF-G</shortName>
    </recommendedName>
</protein>
<dbReference type="EMBL" id="CP000489">
    <property type="protein sequence ID" value="ABL68867.1"/>
    <property type="molecule type" value="Genomic_DNA"/>
</dbReference>
<dbReference type="RefSeq" id="WP_011747099.1">
    <property type="nucleotide sequence ID" value="NC_008686.1"/>
</dbReference>
<dbReference type="SMR" id="A1B023"/>
<dbReference type="STRING" id="318586.Pden_0755"/>
<dbReference type="EnsemblBacteria" id="ABL68867">
    <property type="protein sequence ID" value="ABL68867"/>
    <property type="gene ID" value="Pden_0755"/>
</dbReference>
<dbReference type="GeneID" id="93451979"/>
<dbReference type="KEGG" id="pde:Pden_0755"/>
<dbReference type="eggNOG" id="COG0480">
    <property type="taxonomic scope" value="Bacteria"/>
</dbReference>
<dbReference type="HOGENOM" id="CLU_002794_4_1_5"/>
<dbReference type="OrthoDB" id="9802948at2"/>
<dbReference type="Proteomes" id="UP000000361">
    <property type="component" value="Chromosome 1"/>
</dbReference>
<dbReference type="GO" id="GO:0005737">
    <property type="term" value="C:cytoplasm"/>
    <property type="evidence" value="ECO:0007669"/>
    <property type="project" value="UniProtKB-SubCell"/>
</dbReference>
<dbReference type="GO" id="GO:0005525">
    <property type="term" value="F:GTP binding"/>
    <property type="evidence" value="ECO:0007669"/>
    <property type="project" value="UniProtKB-UniRule"/>
</dbReference>
<dbReference type="GO" id="GO:0003924">
    <property type="term" value="F:GTPase activity"/>
    <property type="evidence" value="ECO:0007669"/>
    <property type="project" value="InterPro"/>
</dbReference>
<dbReference type="GO" id="GO:0003746">
    <property type="term" value="F:translation elongation factor activity"/>
    <property type="evidence" value="ECO:0007669"/>
    <property type="project" value="UniProtKB-UniRule"/>
</dbReference>
<dbReference type="GO" id="GO:0032790">
    <property type="term" value="P:ribosome disassembly"/>
    <property type="evidence" value="ECO:0007669"/>
    <property type="project" value="TreeGrafter"/>
</dbReference>
<dbReference type="CDD" id="cd01886">
    <property type="entry name" value="EF-G"/>
    <property type="match status" value="1"/>
</dbReference>
<dbReference type="CDD" id="cd16262">
    <property type="entry name" value="EFG_III"/>
    <property type="match status" value="1"/>
</dbReference>
<dbReference type="CDD" id="cd01434">
    <property type="entry name" value="EFG_mtEFG1_IV"/>
    <property type="match status" value="1"/>
</dbReference>
<dbReference type="CDD" id="cd03713">
    <property type="entry name" value="EFG_mtEFG_C"/>
    <property type="match status" value="1"/>
</dbReference>
<dbReference type="CDD" id="cd04088">
    <property type="entry name" value="EFG_mtEFG_II"/>
    <property type="match status" value="1"/>
</dbReference>
<dbReference type="FunFam" id="2.40.30.10:FF:000006">
    <property type="entry name" value="Elongation factor G"/>
    <property type="match status" value="1"/>
</dbReference>
<dbReference type="FunFam" id="3.30.230.10:FF:000003">
    <property type="entry name" value="Elongation factor G"/>
    <property type="match status" value="1"/>
</dbReference>
<dbReference type="FunFam" id="3.30.70.240:FF:000001">
    <property type="entry name" value="Elongation factor G"/>
    <property type="match status" value="1"/>
</dbReference>
<dbReference type="FunFam" id="3.30.70.870:FF:000001">
    <property type="entry name" value="Elongation factor G"/>
    <property type="match status" value="1"/>
</dbReference>
<dbReference type="FunFam" id="3.40.50.300:FF:000029">
    <property type="entry name" value="Elongation factor G"/>
    <property type="match status" value="1"/>
</dbReference>
<dbReference type="Gene3D" id="3.30.230.10">
    <property type="match status" value="1"/>
</dbReference>
<dbReference type="Gene3D" id="3.30.70.240">
    <property type="match status" value="1"/>
</dbReference>
<dbReference type="Gene3D" id="3.30.70.870">
    <property type="entry name" value="Elongation Factor G (Translational Gtpase), domain 3"/>
    <property type="match status" value="1"/>
</dbReference>
<dbReference type="Gene3D" id="3.40.50.300">
    <property type="entry name" value="P-loop containing nucleotide triphosphate hydrolases"/>
    <property type="match status" value="1"/>
</dbReference>
<dbReference type="Gene3D" id="2.40.30.10">
    <property type="entry name" value="Translation factors"/>
    <property type="match status" value="1"/>
</dbReference>
<dbReference type="HAMAP" id="MF_00054_B">
    <property type="entry name" value="EF_G_EF_2_B"/>
    <property type="match status" value="1"/>
</dbReference>
<dbReference type="InterPro" id="IPR053905">
    <property type="entry name" value="EF-G-like_DII"/>
</dbReference>
<dbReference type="InterPro" id="IPR041095">
    <property type="entry name" value="EFG_II"/>
</dbReference>
<dbReference type="InterPro" id="IPR009022">
    <property type="entry name" value="EFG_III"/>
</dbReference>
<dbReference type="InterPro" id="IPR035647">
    <property type="entry name" value="EFG_III/V"/>
</dbReference>
<dbReference type="InterPro" id="IPR047872">
    <property type="entry name" value="EFG_IV"/>
</dbReference>
<dbReference type="InterPro" id="IPR035649">
    <property type="entry name" value="EFG_V"/>
</dbReference>
<dbReference type="InterPro" id="IPR000640">
    <property type="entry name" value="EFG_V-like"/>
</dbReference>
<dbReference type="InterPro" id="IPR031157">
    <property type="entry name" value="G_TR_CS"/>
</dbReference>
<dbReference type="InterPro" id="IPR027417">
    <property type="entry name" value="P-loop_NTPase"/>
</dbReference>
<dbReference type="InterPro" id="IPR020568">
    <property type="entry name" value="Ribosomal_Su5_D2-typ_SF"/>
</dbReference>
<dbReference type="InterPro" id="IPR014721">
    <property type="entry name" value="Ribsml_uS5_D2-typ_fold_subgr"/>
</dbReference>
<dbReference type="InterPro" id="IPR005225">
    <property type="entry name" value="Small_GTP-bd"/>
</dbReference>
<dbReference type="InterPro" id="IPR000795">
    <property type="entry name" value="T_Tr_GTP-bd_dom"/>
</dbReference>
<dbReference type="InterPro" id="IPR009000">
    <property type="entry name" value="Transl_B-barrel_sf"/>
</dbReference>
<dbReference type="InterPro" id="IPR004540">
    <property type="entry name" value="Transl_elong_EFG/EF2"/>
</dbReference>
<dbReference type="InterPro" id="IPR005517">
    <property type="entry name" value="Transl_elong_EFG/EF2_IV"/>
</dbReference>
<dbReference type="NCBIfam" id="TIGR00484">
    <property type="entry name" value="EF-G"/>
    <property type="match status" value="1"/>
</dbReference>
<dbReference type="NCBIfam" id="NF009381">
    <property type="entry name" value="PRK12740.1-5"/>
    <property type="match status" value="1"/>
</dbReference>
<dbReference type="NCBIfam" id="TIGR00231">
    <property type="entry name" value="small_GTP"/>
    <property type="match status" value="1"/>
</dbReference>
<dbReference type="PANTHER" id="PTHR43261:SF1">
    <property type="entry name" value="RIBOSOME-RELEASING FACTOR 2, MITOCHONDRIAL"/>
    <property type="match status" value="1"/>
</dbReference>
<dbReference type="PANTHER" id="PTHR43261">
    <property type="entry name" value="TRANSLATION ELONGATION FACTOR G-RELATED"/>
    <property type="match status" value="1"/>
</dbReference>
<dbReference type="Pfam" id="PF22042">
    <property type="entry name" value="EF-G_D2"/>
    <property type="match status" value="1"/>
</dbReference>
<dbReference type="Pfam" id="PF00679">
    <property type="entry name" value="EFG_C"/>
    <property type="match status" value="1"/>
</dbReference>
<dbReference type="Pfam" id="PF14492">
    <property type="entry name" value="EFG_III"/>
    <property type="match status" value="1"/>
</dbReference>
<dbReference type="Pfam" id="PF03764">
    <property type="entry name" value="EFG_IV"/>
    <property type="match status" value="1"/>
</dbReference>
<dbReference type="Pfam" id="PF00009">
    <property type="entry name" value="GTP_EFTU"/>
    <property type="match status" value="1"/>
</dbReference>
<dbReference type="PRINTS" id="PR00315">
    <property type="entry name" value="ELONGATNFCT"/>
</dbReference>
<dbReference type="SMART" id="SM00838">
    <property type="entry name" value="EFG_C"/>
    <property type="match status" value="1"/>
</dbReference>
<dbReference type="SMART" id="SM00889">
    <property type="entry name" value="EFG_IV"/>
    <property type="match status" value="1"/>
</dbReference>
<dbReference type="SUPFAM" id="SSF54980">
    <property type="entry name" value="EF-G C-terminal domain-like"/>
    <property type="match status" value="2"/>
</dbReference>
<dbReference type="SUPFAM" id="SSF52540">
    <property type="entry name" value="P-loop containing nucleoside triphosphate hydrolases"/>
    <property type="match status" value="1"/>
</dbReference>
<dbReference type="SUPFAM" id="SSF54211">
    <property type="entry name" value="Ribosomal protein S5 domain 2-like"/>
    <property type="match status" value="1"/>
</dbReference>
<dbReference type="SUPFAM" id="SSF50447">
    <property type="entry name" value="Translation proteins"/>
    <property type="match status" value="1"/>
</dbReference>
<dbReference type="PROSITE" id="PS00301">
    <property type="entry name" value="G_TR_1"/>
    <property type="match status" value="1"/>
</dbReference>
<dbReference type="PROSITE" id="PS51722">
    <property type="entry name" value="G_TR_2"/>
    <property type="match status" value="1"/>
</dbReference>
<reference key="1">
    <citation type="submission" date="2006-12" db="EMBL/GenBank/DDBJ databases">
        <title>Complete sequence of chromosome 1 of Paracoccus denitrificans PD1222.</title>
        <authorList>
            <person name="Copeland A."/>
            <person name="Lucas S."/>
            <person name="Lapidus A."/>
            <person name="Barry K."/>
            <person name="Detter J.C."/>
            <person name="Glavina del Rio T."/>
            <person name="Hammon N."/>
            <person name="Israni S."/>
            <person name="Dalin E."/>
            <person name="Tice H."/>
            <person name="Pitluck S."/>
            <person name="Munk A.C."/>
            <person name="Brettin T."/>
            <person name="Bruce D."/>
            <person name="Han C."/>
            <person name="Tapia R."/>
            <person name="Gilna P."/>
            <person name="Schmutz J."/>
            <person name="Larimer F."/>
            <person name="Land M."/>
            <person name="Hauser L."/>
            <person name="Kyrpides N."/>
            <person name="Lykidis A."/>
            <person name="Spiro S."/>
            <person name="Richardson D.J."/>
            <person name="Moir J.W.B."/>
            <person name="Ferguson S.J."/>
            <person name="van Spanning R.J.M."/>
            <person name="Richardson P."/>
        </authorList>
    </citation>
    <scope>NUCLEOTIDE SEQUENCE [LARGE SCALE GENOMIC DNA]</scope>
    <source>
        <strain>Pd 1222</strain>
    </source>
</reference>
<organism>
    <name type="scientific">Paracoccus denitrificans (strain Pd 1222)</name>
    <dbReference type="NCBI Taxonomy" id="318586"/>
    <lineage>
        <taxon>Bacteria</taxon>
        <taxon>Pseudomonadati</taxon>
        <taxon>Pseudomonadota</taxon>
        <taxon>Alphaproteobacteria</taxon>
        <taxon>Rhodobacterales</taxon>
        <taxon>Paracoccaceae</taxon>
        <taxon>Paracoccus</taxon>
    </lineage>
</organism>
<gene>
    <name evidence="1" type="primary">fusA</name>
    <name type="ordered locus">Pden_0755</name>
</gene>
<evidence type="ECO:0000255" key="1">
    <source>
        <dbReference type="HAMAP-Rule" id="MF_00054"/>
    </source>
</evidence>
<sequence>MAREYPLERYRNFGIMAHIDAGKTTTTERILFYTGKNHKMGETHEGASTMDWMEQEAERGITITSAATTTFWQRHEDADFTPDDSERCRFNIIDTPGHVDFTIEVERSLAVLDGAICLLDGNAGVEPQTETVWRQADRYKVPRIVFVNKMDKIGADFFKCVAMIKDRTGGTPCPIALPIGAEDKLEGIVDLIKMEEWVWKGEDLGASWVRQPIRDELQDVAEEWRGKMIELAVEQDDEAMEAYLDGNEPDEATLRKLIRKGTLSLSFFPVMAGSAFKNKGVQPLLNAVVDFLPAPTDVPAYLGFAPGDETETRNIERSASDDQPFSALAFKIMNDPFVGSLTFTRIYSGQLKKGDQMLNATKGKRERVGRMMVMHAINREEIEEAFAGEIIALAGLKETTTGDTLCDPAKPVVLETMTFPEPVIEIAVEPKSKADQEKMGLALQRLAAEDPSFRVETDMESGQTIMKGMGELHLDILVDRMKREFKVEANIGAPQVAYRETISQPAEIDYTHKKQTGGTGQFARVKLQIEPTEPGEGYSFESKIVGGAVPKEYIPGVEKGIKSVMDSGPLAGFPVIDFKVALIDGAFHDVDSSVLAFEIAARAGMREGLKKAGAKLLEPIMRVEVVTPEEYTGSIIGDLTSRRGMVRGQDTRGNANVIDAFVPLANMFGYINNLRSMSSGRAVFTMQFDHYEAVPQNISDEIQKKYA</sequence>
<comment type="function">
    <text evidence="1">Catalyzes the GTP-dependent ribosomal translocation step during translation elongation. During this step, the ribosome changes from the pre-translocational (PRE) to the post-translocational (POST) state as the newly formed A-site-bound peptidyl-tRNA and P-site-bound deacylated tRNA move to the P and E sites, respectively. Catalyzes the coordinated movement of the two tRNA molecules, the mRNA and conformational changes in the ribosome.</text>
</comment>
<comment type="subcellular location">
    <subcellularLocation>
        <location evidence="1">Cytoplasm</location>
    </subcellularLocation>
</comment>
<comment type="similarity">
    <text evidence="1">Belongs to the TRAFAC class translation factor GTPase superfamily. Classic translation factor GTPase family. EF-G/EF-2 subfamily.</text>
</comment>
<accession>A1B023</accession>
<keyword id="KW-0963">Cytoplasm</keyword>
<keyword id="KW-0251">Elongation factor</keyword>
<keyword id="KW-0342">GTP-binding</keyword>
<keyword id="KW-0547">Nucleotide-binding</keyword>
<keyword id="KW-0648">Protein biosynthesis</keyword>
<keyword id="KW-1185">Reference proteome</keyword>
<feature type="chain" id="PRO_1000008863" description="Elongation factor G">
    <location>
        <begin position="1"/>
        <end position="707"/>
    </location>
</feature>
<feature type="domain" description="tr-type G">
    <location>
        <begin position="8"/>
        <end position="296"/>
    </location>
</feature>
<feature type="binding site" evidence="1">
    <location>
        <begin position="17"/>
        <end position="24"/>
    </location>
    <ligand>
        <name>GTP</name>
        <dbReference type="ChEBI" id="CHEBI:37565"/>
    </ligand>
</feature>
<feature type="binding site" evidence="1">
    <location>
        <begin position="94"/>
        <end position="98"/>
    </location>
    <ligand>
        <name>GTP</name>
        <dbReference type="ChEBI" id="CHEBI:37565"/>
    </ligand>
</feature>
<feature type="binding site" evidence="1">
    <location>
        <begin position="148"/>
        <end position="151"/>
    </location>
    <ligand>
        <name>GTP</name>
        <dbReference type="ChEBI" id="CHEBI:37565"/>
    </ligand>
</feature>